<evidence type="ECO:0000256" key="1">
    <source>
        <dbReference type="SAM" id="MobiDB-lite"/>
    </source>
</evidence>
<evidence type="ECO:0000269" key="2">
    <source>
    </source>
</evidence>
<evidence type="ECO:0000269" key="3">
    <source>
    </source>
</evidence>
<evidence type="ECO:0000269" key="4">
    <source>
    </source>
</evidence>
<evidence type="ECO:0000269" key="5">
    <source>
    </source>
</evidence>
<evidence type="ECO:0000303" key="6">
    <source>
    </source>
</evidence>
<evidence type="ECO:0000303" key="7">
    <source>
    </source>
</evidence>
<evidence type="ECO:0000303" key="8">
    <source>
    </source>
</evidence>
<evidence type="ECO:0000303" key="9">
    <source>
    </source>
</evidence>
<evidence type="ECO:0000305" key="10"/>
<evidence type="ECO:0000312" key="11">
    <source>
        <dbReference type="Araport" id="AT3G04740"/>
    </source>
</evidence>
<evidence type="ECO:0000312" key="12">
    <source>
        <dbReference type="EMBL" id="AAF04900.1"/>
    </source>
</evidence>
<keyword id="KW-0010">Activator</keyword>
<keyword id="KW-0217">Developmental protein</keyword>
<keyword id="KW-0238">DNA-binding</keyword>
<keyword id="KW-0341">Growth regulation</keyword>
<keyword id="KW-0539">Nucleus</keyword>
<keyword id="KW-1185">Reference proteome</keyword>
<keyword id="KW-0346">Stress response</keyword>
<keyword id="KW-0804">Transcription</keyword>
<keyword id="KW-0805">Transcription regulation</keyword>
<protein>
    <recommendedName>
        <fullName evidence="7 8 9">Mediator of RNA polymerase II transcription subunit 14</fullName>
    </recommendedName>
    <alternativeName>
        <fullName evidence="6 7">Protein STRUWWELPETER</fullName>
        <shortName evidence="6 7">AtSWP</shortName>
    </alternativeName>
</protein>
<gene>
    <name evidence="7 8 9" type="primary">MED14</name>
    <name evidence="7 8 9" type="synonym">MED14_1</name>
    <name evidence="6 7" type="synonym">SWP</name>
    <name evidence="11" type="ordered locus">At3g04740</name>
    <name evidence="12" type="ORF">F7O18.23</name>
</gene>
<feature type="chain" id="PRO_0000418118" description="Mediator of RNA polymerase II transcription subunit 14">
    <location>
        <begin position="1"/>
        <end position="1703"/>
    </location>
</feature>
<feature type="region of interest" description="Disordered" evidence="1">
    <location>
        <begin position="755"/>
        <end position="781"/>
    </location>
</feature>
<feature type="compositionally biased region" description="Polar residues" evidence="1">
    <location>
        <begin position="755"/>
        <end position="766"/>
    </location>
</feature>
<dbReference type="EMBL" id="AJ511271">
    <property type="protein sequence ID" value="CAD53582.1"/>
    <property type="molecule type" value="mRNA"/>
</dbReference>
<dbReference type="EMBL" id="AC011437">
    <property type="protein sequence ID" value="AAF04900.1"/>
    <property type="molecule type" value="Genomic_DNA"/>
</dbReference>
<dbReference type="EMBL" id="CP002686">
    <property type="protein sequence ID" value="AEE74130.1"/>
    <property type="molecule type" value="Genomic_DNA"/>
</dbReference>
<dbReference type="EMBL" id="AF466359">
    <property type="protein sequence ID" value="AAM09647.1"/>
    <property type="molecule type" value="mRNA"/>
</dbReference>
<dbReference type="RefSeq" id="NP_187125.1">
    <property type="nucleotide sequence ID" value="NM_111346.4"/>
</dbReference>
<dbReference type="SMR" id="Q9SR02"/>
<dbReference type="BioGRID" id="4969">
    <property type="interactions" value="12"/>
</dbReference>
<dbReference type="FunCoup" id="Q9SR02">
    <property type="interactions" value="1915"/>
</dbReference>
<dbReference type="IntAct" id="Q9SR02">
    <property type="interactions" value="3"/>
</dbReference>
<dbReference type="STRING" id="3702.Q9SR02"/>
<dbReference type="iPTMnet" id="Q9SR02"/>
<dbReference type="PaxDb" id="3702-AT3G04740.1"/>
<dbReference type="ProteomicsDB" id="238251"/>
<dbReference type="EnsemblPlants" id="AT3G04740.1">
    <property type="protein sequence ID" value="AT3G04740.1"/>
    <property type="gene ID" value="AT3G04740"/>
</dbReference>
<dbReference type="GeneID" id="819634"/>
<dbReference type="Gramene" id="AT3G04740.1">
    <property type="protein sequence ID" value="AT3G04740.1"/>
    <property type="gene ID" value="AT3G04740"/>
</dbReference>
<dbReference type="KEGG" id="ath:AT3G04740"/>
<dbReference type="Araport" id="AT3G04740"/>
<dbReference type="TAIR" id="AT3G04740">
    <property type="gene designation" value="SWP"/>
</dbReference>
<dbReference type="eggNOG" id="KOG1875">
    <property type="taxonomic scope" value="Eukaryota"/>
</dbReference>
<dbReference type="HOGENOM" id="CLU_002817_0_0_1"/>
<dbReference type="InParanoid" id="Q9SR02"/>
<dbReference type="OMA" id="LDQNCID"/>
<dbReference type="OrthoDB" id="205099at2759"/>
<dbReference type="PhylomeDB" id="Q9SR02"/>
<dbReference type="PRO" id="PR:Q9SR02"/>
<dbReference type="Proteomes" id="UP000006548">
    <property type="component" value="Chromosome 3"/>
</dbReference>
<dbReference type="ExpressionAtlas" id="Q9SR02">
    <property type="expression patterns" value="baseline and differential"/>
</dbReference>
<dbReference type="GO" id="GO:0016592">
    <property type="term" value="C:mediator complex"/>
    <property type="evidence" value="ECO:0000314"/>
    <property type="project" value="UniProtKB"/>
</dbReference>
<dbReference type="GO" id="GO:0009506">
    <property type="term" value="C:plasmodesma"/>
    <property type="evidence" value="ECO:0007005"/>
    <property type="project" value="TAIR"/>
</dbReference>
<dbReference type="GO" id="GO:0043565">
    <property type="term" value="F:sequence-specific DNA binding"/>
    <property type="evidence" value="ECO:0000314"/>
    <property type="project" value="UniProtKB"/>
</dbReference>
<dbReference type="GO" id="GO:0003712">
    <property type="term" value="F:transcription coregulator activity"/>
    <property type="evidence" value="ECO:0000314"/>
    <property type="project" value="TAIR"/>
</dbReference>
<dbReference type="GO" id="GO:0009738">
    <property type="term" value="P:abscisic acid-activated signaling pathway"/>
    <property type="evidence" value="ECO:0000314"/>
    <property type="project" value="TAIR"/>
</dbReference>
<dbReference type="GO" id="GO:0009631">
    <property type="term" value="P:cold acclimation"/>
    <property type="evidence" value="ECO:0000315"/>
    <property type="project" value="TAIR"/>
</dbReference>
<dbReference type="GO" id="GO:0008284">
    <property type="term" value="P:positive regulation of cell population proliferation"/>
    <property type="evidence" value="ECO:0000315"/>
    <property type="project" value="TAIR"/>
</dbReference>
<dbReference type="GO" id="GO:0140922">
    <property type="term" value="P:positive regulation of thermomorphogenesis"/>
    <property type="evidence" value="ECO:0000315"/>
    <property type="project" value="UniProtKB"/>
</dbReference>
<dbReference type="GO" id="GO:0045944">
    <property type="term" value="P:positive regulation of transcription by RNA polymerase II"/>
    <property type="evidence" value="ECO:0000314"/>
    <property type="project" value="TAIR"/>
</dbReference>
<dbReference type="GO" id="GO:1905421">
    <property type="term" value="P:regulation of plant organ morphogenesis"/>
    <property type="evidence" value="ECO:0000315"/>
    <property type="project" value="UniProtKB"/>
</dbReference>
<dbReference type="GO" id="GO:0006357">
    <property type="term" value="P:regulation of transcription by RNA polymerase II"/>
    <property type="evidence" value="ECO:0000315"/>
    <property type="project" value="UniProtKB"/>
</dbReference>
<dbReference type="GO" id="GO:0009266">
    <property type="term" value="P:response to temperature stimulus"/>
    <property type="evidence" value="ECO:0000315"/>
    <property type="project" value="UniProtKB"/>
</dbReference>
<dbReference type="GO" id="GO:0009627">
    <property type="term" value="P:systemic acquired resistance"/>
    <property type="evidence" value="ECO:0000270"/>
    <property type="project" value="TAIR"/>
</dbReference>
<dbReference type="InterPro" id="IPR055122">
    <property type="entry name" value="Med14_N"/>
</dbReference>
<dbReference type="InterPro" id="IPR013947">
    <property type="entry name" value="Mediator_Med14"/>
</dbReference>
<dbReference type="PANTHER" id="PTHR12809">
    <property type="entry name" value="MEDIATOR COMPLEX SUBUNIT"/>
    <property type="match status" value="1"/>
</dbReference>
<dbReference type="PANTHER" id="PTHR12809:SF2">
    <property type="entry name" value="MEDIATOR OF RNA POLYMERASE II TRANSCRIPTION SUBUNIT 14"/>
    <property type="match status" value="1"/>
</dbReference>
<dbReference type="Pfam" id="PF08638">
    <property type="entry name" value="Med14"/>
    <property type="match status" value="1"/>
</dbReference>
<proteinExistence type="evidence at protein level"/>
<accession>Q9SR02</accession>
<sequence length="1703" mass="185509">MAELGQQTVDFSALVGRAAEESFLSFKELVDKSKSTELSDTEKKVSLLKYVAKTQQRMLRLNALAKWCKQVPLINYFQDLGSTLSAHDICFTQAADSLFFMHEGLQQARAPVYDVPSAVEILLTGSYQRLPKCLDDVGMQSSLDEHQQKPALRKLEVLVRSKLLEITLPKEITEVKISKGTVTLSVDGEFKVLVTLGYRGHLSMWRILHLDLLVGERSGPIKLEVTRRHILGDDLERRMSVAENPFTILYAVLHELCVAIVMDTVIRQVRALLQGRWKDAIRFDLISDTGTTPANQEGEADSVSLRTPGMKLFYWSDSDKNSGPFIKIEPGSDLQIKCSHSTFVIDPLTGKEAEFSLDQSCIDVEKLLLKAICCNRYTRLLEIQKELLRNTRICRTPSDVILQALLDEPGIEGDNMVDSKERVEPEVLRVRAYGSSFFTLGINIRTGRFLLQSSKSILTSSILEEFEDALNQGSISAVDAFINLRSKSILHFFAAIGKFLGLEVYEHGFGINKVPKSLLDGSSILTLGFPDCESSHLLLMELEKDFTPLFKLLETQMDGSGKPQSFNDPSNILRAKKIDIGQIRILEDDLNLITSDVVKFVSSFSDAEGINQASGHRQPGLVDEALTEMSGSQLSFSSVVDGVFGLQKVTSALMSIDGHGLVPKNLSAVTGHGKAPMLTSYHSDSLYNRQGPLQSSSYNMLSSPPGKGSAMKKIAISNSDQELSLILSPSLSTGNGVSESGSRLVTESSLSPLPLSQTADLATSSAGPLLRKDQKPRKRSASDLLRLIPSLQVVEGVASPNKRRKTSELVQSELVKSWSPASQTLSTAVSTSTKTIGCSYGNLIAEANKGNAPSSVFVYALLHVVRHSSLSIKHAKLTSQMEALDIQYVEEMGLRDAFSDIWFRLPFAQNDSWQHICLQLGRPGSMCWDVKINDQHFRDLWELQKGSKTTPWGSGVHIANSSDVDSHIRYDPEGVVLSYQSVEADSIKKLVADIQRLSNARMFSLGMRKLLGIKPDEKTEECSANSTMKGSTGGKGSGEPVDRWRAFKIEAVGLTSLWFSFGSGVLARFVVEWESGKDGCTMHVSPDQLWPHTKFLEDFINGAEVESLLDCIRLTAGPLHALAAATRPARASTATGMPVVPATASSRQSNQIQQTQGIIAPSTLAAPNATGQSASATSGNTVASSAPSPLGGGFHGVAMLAAAGRSGPGIVPSSLLPIDVSVVLRGPYWIRIIYRKRFAVDMRCFAGDQVWLQPATPPKGGASIGGSLPCPQFRPFIMEHVAQELNGLEPNLTGSQGATNPNSGNPTVNGVNRVNFSPSSARAAMNRVASVASGSLVVSSGLPVRRTPGTAVPAHVRGELNTAIIGLGDDGGYGGGWVPLVALKKVLRGILKYLGVLWLFAQLPDLLREILGSILKDNEGALLNLDQEQPALRFFVGGYVFAVSVHRVQLLLQVLSVRRFHHQAQQNGSSAAAQEELTQSEIGEICDYFSRRVASEPYDASRVASFITLLTLPISVLREFLKLIAWKKGLSQSQQAGEIAPAQRPRIELCLENHSGTDLDNNCAAKSNIHYDRPHNTVDFALTVVLDPVHIPHINAAGGAAWLPYCVSVRLRYTFGENPSVTFLGMEGSHGGRACWQRVDDWEKCKQRVSRTVEVNGSAAGDLTQGKLKLVADSVQRTLHLCLQGLREGGNNNNNTHQKEFTI</sequence>
<comment type="function">
    <text evidence="2 3 5">Component of the Mediator complex, a coactivator involved in the regulated transcription of nearly all RNA polymerase II-dependent genes. Mediator functions as a bridge to convey information from gene-specific regulatory proteins to the basal RNA polymerase II transcription machinery. The Mediator complex, having a compact conformation in its free form, is recruited to promoters by direct interactions with regulatory proteins and serves for the assembly of a functional pre-initiation complex with RNA polymerase II and the general transcription factors. Binds to G-box (5'-CACGTG-3')-containing regions of target genes promoters (e.g. IAA29 and IAA19) (PubMed:36063057). Involved in defining the duration of cell proliferation. Element of a PIF4/HMR/MED14-dependent thermoresponsive process; required for thermomorphogenetic hypocotyl growth in response to daytime warm temperature elicitation by associating to the promoters of thermoresponsive growth-relevant genes (e.g. mainly involved in biosynthesis and signaling of the phytohormone auxin); this also process implies PIF4 and its transcriptional coactivator PTAC12/HMR/PAP5 to promote the expression of target genes (PubMed:36063057).</text>
</comment>
<comment type="subunit">
    <text evidence="3 4 5">Component of the Mediator complex. Interacts with CDKE-1, HDA19 and LUG (PubMed:17526732, PubMed:17560376). Interacts with PTAC12/HMR/PAP5 and PIF4 (PubMed:36063057).</text>
</comment>
<comment type="interaction">
    <interactant intactId="EBI-1386248">
        <id>Q9SR02</id>
    </interactant>
    <interactant intactId="EBI-1386187">
        <id>F4IXJ7</id>
        <label>MED6</label>
    </interactant>
    <organismsDiffer>false</organismsDiffer>
    <experiments>3</experiments>
</comment>
<comment type="subcellular location">
    <subcellularLocation>
        <location evidence="10">Nucleus</location>
    </subcellularLocation>
</comment>
<comment type="tissue specificity">
    <text evidence="2">Expressed in roots, stems, developing embryos, young leaf primordia, shoot apical meristems, inflorescence meristems, tapetum in anthers, ovules and floral organ primordia, but not in mature organs.</text>
</comment>
<comment type="developmental stage">
    <text evidence="2">During embryogenesis, detected in all cells from the early octant to the torpedo stage.</text>
</comment>
<comment type="induction">
    <text evidence="5">Induced by PTAC12/HMR/PAP5.</text>
</comment>
<comment type="disruption phenotype">
    <text evidence="2 5">Dwarf plants with disorganized shoot apical meristem, stem fasciation, abnormal floral structure, delayed flowering and sterile flowers (PubMed:12426376). Reduced cell numbers in aerial organs (PubMed:12426376). Altered sensitivity to warm temperature (e.g. 27 degrees Celsius) leading to lower thermomorphogenetic hypocotyl growth and defects in the induction of thermoresponsive growth-relevant genes (e.g. mainly involved in biosynthesis and signaling of the phytohormone auxin) as well as low levels of PTAC12/HMR/PAP5 and PIF4 (PubMed:36063057).</text>
</comment>
<comment type="similarity">
    <text evidence="10">Belongs to the Mediator complex subunit 14 family.</text>
</comment>
<reference key="1">
    <citation type="journal article" date="2002" name="EMBO J.">
        <title>Cell numbers and leaf development in Arabidopsis: a functional analysis of the STRUWWELPETER gene.</title>
        <authorList>
            <person name="Autran D."/>
            <person name="Jonak C."/>
            <person name="Belcram K."/>
            <person name="Beemster G.T."/>
            <person name="Kronenberger J."/>
            <person name="Grandjean O."/>
            <person name="Inze D."/>
            <person name="Traas J."/>
        </authorList>
    </citation>
    <scope>NUCLEOTIDE SEQUENCE [MRNA]</scope>
    <scope>FUNCTION</scope>
    <scope>DISRUPTION PHENOTYPE</scope>
    <scope>TISSUE SPECIFICITY</scope>
    <scope>DEVELOPMENTAL STAGE</scope>
    <source>
        <tissue>Flower</tissue>
    </source>
</reference>
<reference key="2">
    <citation type="journal article" date="2000" name="Nature">
        <title>Sequence and analysis of chromosome 3 of the plant Arabidopsis thaliana.</title>
        <authorList>
            <person name="Salanoubat M."/>
            <person name="Lemcke K."/>
            <person name="Rieger M."/>
            <person name="Ansorge W."/>
            <person name="Unseld M."/>
            <person name="Fartmann B."/>
            <person name="Valle G."/>
            <person name="Bloecker H."/>
            <person name="Perez-Alonso M."/>
            <person name="Obermaier B."/>
            <person name="Delseny M."/>
            <person name="Boutry M."/>
            <person name="Grivell L.A."/>
            <person name="Mache R."/>
            <person name="Puigdomenech P."/>
            <person name="De Simone V."/>
            <person name="Choisne N."/>
            <person name="Artiguenave F."/>
            <person name="Robert C."/>
            <person name="Brottier P."/>
            <person name="Wincker P."/>
            <person name="Cattolico L."/>
            <person name="Weissenbach J."/>
            <person name="Saurin W."/>
            <person name="Quetier F."/>
            <person name="Schaefer M."/>
            <person name="Mueller-Auer S."/>
            <person name="Gabel C."/>
            <person name="Fuchs M."/>
            <person name="Benes V."/>
            <person name="Wurmbach E."/>
            <person name="Drzonek H."/>
            <person name="Erfle H."/>
            <person name="Jordan N."/>
            <person name="Bangert S."/>
            <person name="Wiedelmann R."/>
            <person name="Kranz H."/>
            <person name="Voss H."/>
            <person name="Holland R."/>
            <person name="Brandt P."/>
            <person name="Nyakatura G."/>
            <person name="Vezzi A."/>
            <person name="D'Angelo M."/>
            <person name="Pallavicini A."/>
            <person name="Toppo S."/>
            <person name="Simionati B."/>
            <person name="Conrad A."/>
            <person name="Hornischer K."/>
            <person name="Kauer G."/>
            <person name="Loehnert T.-H."/>
            <person name="Nordsiek G."/>
            <person name="Reichelt J."/>
            <person name="Scharfe M."/>
            <person name="Schoen O."/>
            <person name="Bargues M."/>
            <person name="Terol J."/>
            <person name="Climent J."/>
            <person name="Navarro P."/>
            <person name="Collado C."/>
            <person name="Perez-Perez A."/>
            <person name="Ottenwaelder B."/>
            <person name="Duchemin D."/>
            <person name="Cooke R."/>
            <person name="Laudie M."/>
            <person name="Berger-Llauro C."/>
            <person name="Purnelle B."/>
            <person name="Masuy D."/>
            <person name="de Haan M."/>
            <person name="Maarse A.C."/>
            <person name="Alcaraz J.-P."/>
            <person name="Cottet A."/>
            <person name="Casacuberta E."/>
            <person name="Monfort A."/>
            <person name="Argiriou A."/>
            <person name="Flores M."/>
            <person name="Liguori R."/>
            <person name="Vitale D."/>
            <person name="Mannhaupt G."/>
            <person name="Haase D."/>
            <person name="Schoof H."/>
            <person name="Rudd S."/>
            <person name="Zaccaria P."/>
            <person name="Mewes H.-W."/>
            <person name="Mayer K.F.X."/>
            <person name="Kaul S."/>
            <person name="Town C.D."/>
            <person name="Koo H.L."/>
            <person name="Tallon L.J."/>
            <person name="Jenkins J."/>
            <person name="Rooney T."/>
            <person name="Rizzo M."/>
            <person name="Walts A."/>
            <person name="Utterback T."/>
            <person name="Fujii C.Y."/>
            <person name="Shea T.P."/>
            <person name="Creasy T.H."/>
            <person name="Haas B."/>
            <person name="Maiti R."/>
            <person name="Wu D."/>
            <person name="Peterson J."/>
            <person name="Van Aken S."/>
            <person name="Pai G."/>
            <person name="Militscher J."/>
            <person name="Sellers P."/>
            <person name="Gill J.E."/>
            <person name="Feldblyum T.V."/>
            <person name="Preuss D."/>
            <person name="Lin X."/>
            <person name="Nierman W.C."/>
            <person name="Salzberg S.L."/>
            <person name="White O."/>
            <person name="Venter J.C."/>
            <person name="Fraser C.M."/>
            <person name="Kaneko T."/>
            <person name="Nakamura Y."/>
            <person name="Sato S."/>
            <person name="Kato T."/>
            <person name="Asamizu E."/>
            <person name="Sasamoto S."/>
            <person name="Kimura T."/>
            <person name="Idesawa K."/>
            <person name="Kawashima K."/>
            <person name="Kishida Y."/>
            <person name="Kiyokawa C."/>
            <person name="Kohara M."/>
            <person name="Matsumoto M."/>
            <person name="Matsuno A."/>
            <person name="Muraki A."/>
            <person name="Nakayama S."/>
            <person name="Nakazaki N."/>
            <person name="Shinpo S."/>
            <person name="Takeuchi C."/>
            <person name="Wada T."/>
            <person name="Watanabe A."/>
            <person name="Yamada M."/>
            <person name="Yasuda M."/>
            <person name="Tabata S."/>
        </authorList>
    </citation>
    <scope>NUCLEOTIDE SEQUENCE [LARGE SCALE GENOMIC DNA]</scope>
    <source>
        <strain>cv. Columbia</strain>
    </source>
</reference>
<reference key="3">
    <citation type="journal article" date="2017" name="Plant J.">
        <title>Araport11: a complete reannotation of the Arabidopsis thaliana reference genome.</title>
        <authorList>
            <person name="Cheng C.Y."/>
            <person name="Krishnakumar V."/>
            <person name="Chan A.P."/>
            <person name="Thibaud-Nissen F."/>
            <person name="Schobel S."/>
            <person name="Town C.D."/>
        </authorList>
    </citation>
    <scope>GENOME REANNOTATION</scope>
    <source>
        <strain>cv. Columbia</strain>
    </source>
</reference>
<reference key="4">
    <citation type="journal article" date="2007" name="Mol. Cell">
        <title>Purification of a plant mediator from Arabidopsis thaliana identifies PFT1 as the Med25 subunit.</title>
        <authorList>
            <person name="Baeckstroem S."/>
            <person name="Elfving N."/>
            <person name="Nilsson R."/>
            <person name="Wingsle G."/>
            <person name="Bjoerklund S."/>
        </authorList>
    </citation>
    <scope>IDENTIFICATION BY MASS SPECTROMETRY</scope>
    <scope>IDENTIFICATION IN THE MEDIATOR COMPLEX</scope>
    <scope>NOMENCLATURE</scope>
</reference>
<reference key="5">
    <citation type="journal article" date="2007" name="Mol. Cell. Biol.">
        <title>The transcription corepressor LEUNIG interacts with the histone deacetylase HDA19 and mediator components MED14 (SWP) and CDK8 (HEN3) to repress transcription.</title>
        <authorList>
            <person name="Gonzalez D."/>
            <person name="Bowen A.J."/>
            <person name="Carroll T.S."/>
            <person name="Conlan R.S."/>
        </authorList>
    </citation>
    <scope>FUNCTION</scope>
    <scope>INTERACTION WITH HDA19; LUG AND CDKE-1</scope>
</reference>
<reference key="6">
    <citation type="journal article" date="2011" name="Plant Physiol.">
        <title>The Mediator complex in plants: structure, phylogeny, and expression profiling of representative genes in a dicot (Arabidopsis) and a monocot (rice) during reproduction and abiotic stress.</title>
        <authorList>
            <person name="Mathur S."/>
            <person name="Vyas S."/>
            <person name="Kapoor S."/>
            <person name="Tyagi A.K."/>
        </authorList>
    </citation>
    <scope>IDENTIFICATION</scope>
    <scope>NOMENCLATURE</scope>
</reference>
<reference key="7">
    <citation type="journal article" date="2022" name="Plant Physiol.">
        <title>PHYTOCHROME-INTERACTING FACTOR 4/HEMERA-mediated thermosensory growth requires the mediator subunit MED14.</title>
        <authorList>
            <person name="Bajracharya A."/>
            <person name="Xi J."/>
            <person name="Grace K.F."/>
            <person name="Bayer E.E."/>
            <person name="Grant C.A."/>
            <person name="Clutton C.H."/>
            <person name="Baerson S.R."/>
            <person name="Agarwal A.K."/>
            <person name="Qiu Y."/>
        </authorList>
    </citation>
    <scope>FUNCTION</scope>
    <scope>DISRUPTION PHENOTYPE</scope>
    <scope>INTERACTION WITH PIF4 AND PTAC12/HMR/PAP5</scope>
    <scope>INDUCTION BY PTAC12/HMR/PAP5</scope>
    <source>
        <strain>cv. Columbia</strain>
    </source>
</reference>
<name>MED14_ARATH</name>
<organism>
    <name type="scientific">Arabidopsis thaliana</name>
    <name type="common">Mouse-ear cress</name>
    <dbReference type="NCBI Taxonomy" id="3702"/>
    <lineage>
        <taxon>Eukaryota</taxon>
        <taxon>Viridiplantae</taxon>
        <taxon>Streptophyta</taxon>
        <taxon>Embryophyta</taxon>
        <taxon>Tracheophyta</taxon>
        <taxon>Spermatophyta</taxon>
        <taxon>Magnoliopsida</taxon>
        <taxon>eudicotyledons</taxon>
        <taxon>Gunneridae</taxon>
        <taxon>Pentapetalae</taxon>
        <taxon>rosids</taxon>
        <taxon>malvids</taxon>
        <taxon>Brassicales</taxon>
        <taxon>Brassicaceae</taxon>
        <taxon>Camelineae</taxon>
        <taxon>Arabidopsis</taxon>
    </lineage>
</organism>